<name>NU170_CHATD</name>
<protein>
    <recommendedName>
        <fullName evidence="4">Nucleoporin NUP170</fullName>
    </recommendedName>
    <alternativeName>
        <fullName>Nuclear pore protein NUP170</fullName>
    </alternativeName>
</protein>
<reference key="1">
    <citation type="journal article" date="2011" name="Cell">
        <title>Insight into structure and assembly of the nuclear pore complex by utilizing the genome of a eukaryotic thermophile.</title>
        <authorList>
            <person name="Amlacher S."/>
            <person name="Sarges P."/>
            <person name="Flemming D."/>
            <person name="van Noort V."/>
            <person name="Kunze R."/>
            <person name="Devos D.P."/>
            <person name="Arumugam M."/>
            <person name="Bork P."/>
            <person name="Hurt E."/>
        </authorList>
    </citation>
    <scope>NUCLEOTIDE SEQUENCE [LARGE SCALE GENOMIC DNA]</scope>
    <scope>SUBUNIT</scope>
    <source>
        <strain>DSM 1495 / CBS 144.50 / IMI 039719</strain>
    </source>
</reference>
<sequence>MEPMTPMRPIPGAYVNTPAPPTANPARRRLFTEASSSGAAATTQLGAAPAPLASTMAPGPEINSGLMTPQAREDLPPVAKAAQVVNQTLQLDDSYPDLDSYCRPGASSDYEMQSSDSSWAPFHVVRHHNIPDKVFEHLNAGEVFTKLGLFAEIGYAWASIDSSLFLWDYTHPNPELIGYEEATHTITAVALVPPKPGVFVKTITHVLVVATTSEIILLGVSATPTPSGSKSLTLYSTRMSVHRGGSDVSFIVGTKDGRIFLGGESDTDIHEIFYQQEERWFSSRCGKINHSHPGWSAVVPSLAGLPFGSRQQEWLRGLYVDDTRNLLYSLSNRSTIRTYHMEGPEKLTKVIEKDKTSCLRDFAHMADSSPLFTDKTNIVALSPIPATEASKLHLMALTDTGCRLFLSATSSASYTMGGATSLAPQSMQLQFVKFPPRESPTRIRTLNGQIIDSQLDKTSRALDPSALGFRFSPGYFFDVVRKHPNQDMLFVSAPDTGRIKVTQPASALKYFEQGTWIELENGNRTIEIGLTTAPFAAAKQPLGFGNELAVQFDQVPGEFAVLTNTGVHIVRRRRLVDIFAKALGNCVSASDDALEREVRKFINQYGRVETIAAALAVACGQGSDLRTGTGRGMDRNTENLARAAFIEYGGQPRLAESDGKQSVSESVRLSSRHDALALYLTRLVRTLWKAKVVQVGSGSDISSTIPTSKLVTIQENVERLRNFLEANKSTIQGLAPPSERLFGRQEDIANQKEHQALHALQKLMESISEGISFVLMLFDERVSDIYARLDAVSQQQLKDLTYEQLFSQTPGKELAKVLVKAIVNRNIASGANVETVADALRRRCGSFCSPDDVVTFKAQEQLQRASEQAHNSPVLRALLAESLRLFEQVAGSLTPANLTTAVEQYISLKYYAGAIQLCLTVAQQKDRGNTALSWVNDGKPANDSRKKAFDERKICYNLIHQVLDKLESDFAGEPELVDGRPTLAATKRMEAYNVVNDSSDEVFHFDLYEWYIEKGWTDRILSIDSPHVITYLQRLAETDFRHAELLCRFYTTRSRFFEAAQVQTNLAKSDLNISLKDRIILLSRAKGNASVNTIGISRQQQQQLNHEASELLEIAHIQDDLLERLVADPRIPEERKAEIEEFLDGPIRTLTDLFNDYADQANYYDLCLLIFHAADFHNPRTILDTWNNLINQSHFEAEQRREYWEIVQAGGDLPAGVIAPIAEPPLPYVYVSQQIQLIAHRTSLDSLIFPVNSLLPVVCAYAINNGQDASIGADPCWPIQLFLNLGVPHALVVQVLENVLDTQEAPFTGRRRKLVVQWIAMAVDMWVREVERRGAMAAAAASGASGSEAVMGSWVSELLGRADQVLTQIAGTGATLRGGAASDAEEIASLRRTVKGLKRSVDMLLGGEMARMSFFR</sequence>
<proteinExistence type="evidence at protein level"/>
<feature type="chain" id="PRO_0000433170" description="Nucleoporin NUP170">
    <location>
        <begin position="1"/>
        <end position="1416"/>
    </location>
</feature>
<feature type="region of interest" description="Disordered" evidence="2">
    <location>
        <begin position="1"/>
        <end position="26"/>
    </location>
</feature>
<feature type="region of interest" description="Disordered" evidence="2">
    <location>
        <begin position="50"/>
        <end position="69"/>
    </location>
</feature>
<feature type="helix" evidence="6">
    <location>
        <begin position="77"/>
        <end position="92"/>
    </location>
</feature>
<feature type="helix" evidence="6">
    <location>
        <begin position="98"/>
        <end position="101"/>
    </location>
</feature>
<feature type="strand" evidence="6">
    <location>
        <begin position="104"/>
        <end position="107"/>
    </location>
</feature>
<feature type="strand" evidence="6">
    <location>
        <begin position="111"/>
        <end position="113"/>
    </location>
</feature>
<feature type="strand" evidence="6">
    <location>
        <begin position="121"/>
        <end position="129"/>
    </location>
</feature>
<feature type="helix" evidence="6">
    <location>
        <begin position="132"/>
        <end position="139"/>
    </location>
</feature>
<feature type="strand" evidence="6">
    <location>
        <begin position="145"/>
        <end position="150"/>
    </location>
</feature>
<feature type="turn" evidence="6">
    <location>
        <begin position="151"/>
        <end position="154"/>
    </location>
</feature>
<feature type="strand" evidence="6">
    <location>
        <begin position="155"/>
        <end position="160"/>
    </location>
</feature>
<feature type="strand" evidence="6">
    <location>
        <begin position="163"/>
        <end position="168"/>
    </location>
</feature>
<feature type="strand" evidence="6">
    <location>
        <begin position="171"/>
        <end position="173"/>
    </location>
</feature>
<feature type="strand" evidence="6">
    <location>
        <begin position="177"/>
        <end position="179"/>
    </location>
</feature>
<feature type="strand" evidence="6">
    <location>
        <begin position="186"/>
        <end position="192"/>
    </location>
</feature>
<feature type="turn" evidence="6">
    <location>
        <begin position="196"/>
        <end position="198"/>
    </location>
</feature>
<feature type="strand" evidence="6">
    <location>
        <begin position="205"/>
        <end position="223"/>
    </location>
</feature>
<feature type="strand" evidence="6">
    <location>
        <begin position="231"/>
        <end position="235"/>
    </location>
</feature>
<feature type="strand" evidence="6">
    <location>
        <begin position="240"/>
        <end position="242"/>
    </location>
</feature>
<feature type="strand" evidence="6">
    <location>
        <begin position="250"/>
        <end position="253"/>
    </location>
</feature>
<feature type="strand" evidence="6">
    <location>
        <begin position="259"/>
        <end position="262"/>
    </location>
</feature>
<feature type="strand" evidence="6">
    <location>
        <begin position="270"/>
        <end position="274"/>
    </location>
</feature>
<feature type="strand" evidence="6">
    <location>
        <begin position="280"/>
        <end position="282"/>
    </location>
</feature>
<feature type="strand" evidence="6">
    <location>
        <begin position="284"/>
        <end position="291"/>
    </location>
</feature>
<feature type="strand" evidence="6">
    <location>
        <begin position="315"/>
        <end position="321"/>
    </location>
</feature>
<feature type="helix" evidence="6">
    <location>
        <begin position="322"/>
        <end position="324"/>
    </location>
</feature>
<feature type="strand" evidence="6">
    <location>
        <begin position="326"/>
        <end position="331"/>
    </location>
</feature>
<feature type="strand" evidence="6">
    <location>
        <begin position="336"/>
        <end position="340"/>
    </location>
</feature>
<feature type="strand" evidence="6">
    <location>
        <begin position="343"/>
        <end position="345"/>
    </location>
</feature>
<feature type="strand" evidence="6">
    <location>
        <begin position="348"/>
        <end position="353"/>
    </location>
</feature>
<feature type="helix" evidence="6">
    <location>
        <begin position="355"/>
        <end position="364"/>
    </location>
</feature>
<feature type="strand" evidence="6">
    <location>
        <begin position="378"/>
        <end position="383"/>
    </location>
</feature>
<feature type="turn" evidence="6">
    <location>
        <begin position="386"/>
        <end position="388"/>
    </location>
</feature>
<feature type="strand" evidence="6">
    <location>
        <begin position="390"/>
        <end position="398"/>
    </location>
</feature>
<feature type="strand" evidence="6">
    <location>
        <begin position="403"/>
        <end position="409"/>
    </location>
</feature>
<feature type="strand" evidence="6">
    <location>
        <begin position="411"/>
        <end position="413"/>
    </location>
</feature>
<feature type="strand" evidence="6">
    <location>
        <begin position="426"/>
        <end position="433"/>
    </location>
</feature>
<feature type="strand" evidence="6">
    <location>
        <begin position="464"/>
        <end position="471"/>
    </location>
</feature>
<feature type="turn" evidence="6">
    <location>
        <begin position="472"/>
        <end position="474"/>
    </location>
</feature>
<feature type="strand" evidence="6">
    <location>
        <begin position="475"/>
        <end position="480"/>
    </location>
</feature>
<feature type="strand" evidence="6">
    <location>
        <begin position="482"/>
        <end position="485"/>
    </location>
</feature>
<feature type="strand" evidence="6">
    <location>
        <begin position="488"/>
        <end position="494"/>
    </location>
</feature>
<feature type="helix" evidence="6">
    <location>
        <begin position="496"/>
        <end position="501"/>
    </location>
</feature>
<feature type="helix" evidence="6">
    <location>
        <begin position="505"/>
        <end position="507"/>
    </location>
</feature>
<feature type="strand" evidence="6">
    <location>
        <begin position="512"/>
        <end position="518"/>
    </location>
</feature>
<feature type="strand" evidence="6">
    <location>
        <begin position="525"/>
        <end position="530"/>
    </location>
</feature>
<feature type="strand" evidence="6">
    <location>
        <begin position="537"/>
        <end position="540"/>
    </location>
</feature>
<feature type="helix" evidence="6">
    <location>
        <begin position="541"/>
        <end position="544"/>
    </location>
</feature>
<feature type="helix" evidence="6">
    <location>
        <begin position="548"/>
        <end position="550"/>
    </location>
</feature>
<feature type="turn" evidence="6">
    <location>
        <begin position="551"/>
        <end position="553"/>
    </location>
</feature>
<feature type="strand" evidence="6">
    <location>
        <begin position="558"/>
        <end position="572"/>
    </location>
</feature>
<feature type="helix" evidence="6">
    <location>
        <begin position="575"/>
        <end position="586"/>
    </location>
</feature>
<feature type="helix" evidence="6">
    <location>
        <begin position="591"/>
        <end position="605"/>
    </location>
</feature>
<feature type="helix" evidence="6">
    <location>
        <begin position="607"/>
        <end position="618"/>
    </location>
</feature>
<feature type="turn" evidence="6">
    <location>
        <begin position="619"/>
        <end position="624"/>
    </location>
</feature>
<feature type="helix" evidence="6">
    <location>
        <begin position="634"/>
        <end position="647"/>
    </location>
</feature>
<feature type="helix" evidence="6">
    <location>
        <begin position="671"/>
        <end position="684"/>
    </location>
</feature>
<feature type="turn" evidence="6">
    <location>
        <begin position="685"/>
        <end position="689"/>
    </location>
</feature>
<feature type="strand" evidence="6">
    <location>
        <begin position="690"/>
        <end position="694"/>
    </location>
</feature>
<feature type="strand" evidence="6">
    <location>
        <begin position="702"/>
        <end position="705"/>
    </location>
</feature>
<feature type="helix" evidence="6">
    <location>
        <begin position="707"/>
        <end position="725"/>
    </location>
</feature>
<feature type="turn" evidence="6">
    <location>
        <begin position="726"/>
        <end position="730"/>
    </location>
</feature>
<feature type="turn" evidence="6">
    <location>
        <begin position="732"/>
        <end position="734"/>
    </location>
</feature>
<feature type="helix" evidence="6">
    <location>
        <begin position="748"/>
        <end position="779"/>
    </location>
</feature>
<feature type="helix" evidence="6">
    <location>
        <begin position="782"/>
        <end position="787"/>
    </location>
</feature>
<feature type="helix" evidence="6">
    <location>
        <begin position="791"/>
        <end position="798"/>
    </location>
</feature>
<feature type="helix" evidence="6">
    <location>
        <begin position="802"/>
        <end position="807"/>
    </location>
</feature>
<feature type="helix" evidence="6">
    <location>
        <begin position="809"/>
        <end position="824"/>
    </location>
</feature>
<feature type="helix" evidence="8">
    <location>
        <begin position="852"/>
        <end position="867"/>
    </location>
</feature>
<feature type="turn" evidence="8">
    <location>
        <begin position="868"/>
        <end position="870"/>
    </location>
</feature>
<feature type="helix" evidence="8">
    <location>
        <begin position="872"/>
        <end position="888"/>
    </location>
</feature>
<feature type="helix" evidence="8">
    <location>
        <begin position="889"/>
        <end position="892"/>
    </location>
</feature>
<feature type="helix" evidence="8">
    <location>
        <begin position="895"/>
        <end position="907"/>
    </location>
</feature>
<feature type="helix" evidence="8">
    <location>
        <begin position="911"/>
        <end position="924"/>
    </location>
</feature>
<feature type="turn" evidence="8">
    <location>
        <begin position="925"/>
        <end position="928"/>
    </location>
</feature>
<feature type="helix" evidence="8">
    <location>
        <begin position="930"/>
        <end position="937"/>
    </location>
</feature>
<feature type="helix" evidence="8">
    <location>
        <begin position="946"/>
        <end position="970"/>
    </location>
</feature>
<feature type="strand" evidence="7">
    <location>
        <begin position="975"/>
        <end position="977"/>
    </location>
</feature>
<feature type="helix" evidence="8">
    <location>
        <begin position="983"/>
        <end position="997"/>
    </location>
</feature>
<feature type="helix" evidence="8">
    <location>
        <begin position="1001"/>
        <end position="1014"/>
    </location>
</feature>
<feature type="helix" evidence="8">
    <location>
        <begin position="1017"/>
        <end position="1021"/>
    </location>
</feature>
<feature type="helix" evidence="8">
    <location>
        <begin position="1027"/>
        <end position="1036"/>
    </location>
</feature>
<feature type="helix" evidence="8">
    <location>
        <begin position="1040"/>
        <end position="1052"/>
    </location>
</feature>
<feature type="helix" evidence="8">
    <location>
        <begin position="1056"/>
        <end position="1067"/>
    </location>
</feature>
<feature type="strand" evidence="8">
    <location>
        <begin position="1069"/>
        <end position="1072"/>
    </location>
</feature>
<feature type="helix" evidence="8">
    <location>
        <begin position="1075"/>
        <end position="1088"/>
    </location>
</feature>
<feature type="helix" evidence="8">
    <location>
        <begin position="1098"/>
        <end position="1127"/>
    </location>
</feature>
<feature type="helix" evidence="8">
    <location>
        <begin position="1133"/>
        <end position="1143"/>
    </location>
</feature>
<feature type="strand" evidence="8">
    <location>
        <begin position="1144"/>
        <end position="1146"/>
    </location>
</feature>
<feature type="helix" evidence="8">
    <location>
        <begin position="1150"/>
        <end position="1156"/>
    </location>
</feature>
<feature type="turn" evidence="8">
    <location>
        <begin position="1157"/>
        <end position="1162"/>
    </location>
</feature>
<feature type="helix" evidence="8">
    <location>
        <begin position="1164"/>
        <end position="1173"/>
    </location>
</feature>
<feature type="helix" evidence="8">
    <location>
        <begin position="1179"/>
        <end position="1208"/>
    </location>
</feature>
<feature type="helix" evidence="8">
    <location>
        <begin position="1227"/>
        <end position="1242"/>
    </location>
</feature>
<feature type="strand" evidence="8">
    <location>
        <begin position="1244"/>
        <end position="1246"/>
    </location>
</feature>
<feature type="helix" evidence="8">
    <location>
        <begin position="1251"/>
        <end position="1264"/>
    </location>
</feature>
<feature type="helix" evidence="8">
    <location>
        <begin position="1269"/>
        <end position="1271"/>
    </location>
</feature>
<feature type="helix" evidence="8">
    <location>
        <begin position="1277"/>
        <end position="1284"/>
    </location>
</feature>
<feature type="helix" evidence="8">
    <location>
        <begin position="1289"/>
        <end position="1302"/>
    </location>
</feature>
<feature type="helix" evidence="8">
    <location>
        <begin position="1309"/>
        <end position="1311"/>
    </location>
</feature>
<feature type="helix" evidence="8">
    <location>
        <begin position="1312"/>
        <end position="1333"/>
    </location>
</feature>
<feature type="helix" evidence="8">
    <location>
        <begin position="1353"/>
        <end position="1374"/>
    </location>
</feature>
<feature type="helix" evidence="8">
    <location>
        <begin position="1384"/>
        <end position="1406"/>
    </location>
</feature>
<feature type="strand" evidence="7">
    <location>
        <begin position="1412"/>
        <end position="1414"/>
    </location>
</feature>
<comment type="function">
    <text evidence="1">Functions as a component of the nuclear pore complex (NPC). NPC components, collectively referred to as nucleoporins (NUPs), can play the role of both NPC structural components and of docking or interaction partners for transiently associated nuclear transport factors. NUP170 probably plays an important role in NPC assembly and organization.</text>
</comment>
<comment type="subunit">
    <text evidence="1 3">Component of the nuclear pore complex (NPC). NPC constitutes the exclusive means of nucleocytoplasmic transport. NPCs allow the passive diffusion of ions and small molecules and the active, nuclear transport receptor-mediated bidirectional transport of macromolecules such as proteins, RNAs, ribonucleoparticles (RNPs), and ribosomal subunits across the nuclear envelope. Due to its 8-fold rotational symmetry, all subunits are present with 8 copies or multiples thereof. Part of a tetrameric NUP192-NUP170-NIC96-NUP53 or NUP188-NUP170-NIC96-NUP53 module.</text>
</comment>
<comment type="interaction">
    <interactant intactId="EBI-4325479">
        <id>G0S7B6</id>
    </interactant>
    <interactant intactId="EBI-4325171">
        <id>G0S156</id>
        <label>NUP53</label>
    </interactant>
    <organismsDiffer>false</organismsDiffer>
    <experiments>12</experiments>
</comment>
<comment type="subcellular location">
    <subcellularLocation>
        <location evidence="1">Nucleus</location>
        <location evidence="1">Nuclear pore complex</location>
    </subcellularLocation>
    <subcellularLocation>
        <location evidence="1">Nucleus membrane</location>
        <topology evidence="1">Peripheral membrane protein</topology>
        <orientation evidence="1">Cytoplasmic side</orientation>
    </subcellularLocation>
    <subcellularLocation>
        <location evidence="1">Nucleus membrane</location>
        <topology evidence="1">Peripheral membrane protein</topology>
        <orientation evidence="1">Nucleoplasmic side</orientation>
    </subcellularLocation>
    <text evidence="1">Symmetric distribution.</text>
</comment>
<comment type="similarity">
    <text evidence="5">Belongs to the non-repetitive/WGA-negative nucleoporin family.</text>
</comment>
<evidence type="ECO:0000250" key="1">
    <source>
        <dbReference type="UniProtKB" id="P38181"/>
    </source>
</evidence>
<evidence type="ECO:0000256" key="2">
    <source>
        <dbReference type="SAM" id="MobiDB-lite"/>
    </source>
</evidence>
<evidence type="ECO:0000269" key="3">
    <source>
    </source>
</evidence>
<evidence type="ECO:0000303" key="4">
    <source>
    </source>
</evidence>
<evidence type="ECO:0000305" key="5"/>
<evidence type="ECO:0007829" key="6">
    <source>
        <dbReference type="PDB" id="5HAX"/>
    </source>
</evidence>
<evidence type="ECO:0007829" key="7">
    <source>
        <dbReference type="PDB" id="5HAY"/>
    </source>
</evidence>
<evidence type="ECO:0007829" key="8">
    <source>
        <dbReference type="PDB" id="5HAZ"/>
    </source>
</evidence>
<keyword id="KW-0002">3D-structure</keyword>
<keyword id="KW-0472">Membrane</keyword>
<keyword id="KW-0509">mRNA transport</keyword>
<keyword id="KW-0906">Nuclear pore complex</keyword>
<keyword id="KW-0539">Nucleus</keyword>
<keyword id="KW-0653">Protein transport</keyword>
<keyword id="KW-1185">Reference proteome</keyword>
<keyword id="KW-0811">Translocation</keyword>
<keyword id="KW-0813">Transport</keyword>
<organism>
    <name type="scientific">Chaetomium thermophilum (strain DSM 1495 / CBS 144.50 / IMI 039719)</name>
    <name type="common">Thermochaetoides thermophila</name>
    <dbReference type="NCBI Taxonomy" id="759272"/>
    <lineage>
        <taxon>Eukaryota</taxon>
        <taxon>Fungi</taxon>
        <taxon>Dikarya</taxon>
        <taxon>Ascomycota</taxon>
        <taxon>Pezizomycotina</taxon>
        <taxon>Sordariomycetes</taxon>
        <taxon>Sordariomycetidae</taxon>
        <taxon>Sordariales</taxon>
        <taxon>Chaetomiaceae</taxon>
        <taxon>Thermochaetoides</taxon>
    </lineage>
</organism>
<accession>G0S7B6</accession>
<accession>G0ZGU4</accession>
<gene>
    <name type="primary">NUP170</name>
    <name type="ORF">CTHT_0036270</name>
</gene>
<dbReference type="EMBL" id="GL988041">
    <property type="protein sequence ID" value="EGS21760.1"/>
    <property type="molecule type" value="Genomic_DNA"/>
</dbReference>
<dbReference type="EMBL" id="JF276286">
    <property type="protein sequence ID" value="AEL00682.1"/>
    <property type="molecule type" value="Genomic_DNA"/>
</dbReference>
<dbReference type="RefSeq" id="XP_006694056.1">
    <property type="nucleotide sequence ID" value="XM_006693993.1"/>
</dbReference>
<dbReference type="PDB" id="5HAX">
    <property type="method" value="X-ray"/>
    <property type="resolution" value="2.10 A"/>
    <property type="chains" value="A=74-827"/>
</dbReference>
<dbReference type="PDB" id="5HAY">
    <property type="method" value="X-ray"/>
    <property type="resolution" value="2.80 A"/>
    <property type="chains" value="A/B=832-1416"/>
</dbReference>
<dbReference type="PDB" id="5HAZ">
    <property type="method" value="X-ray"/>
    <property type="resolution" value="2.10 A"/>
    <property type="chains" value="A=851-1416"/>
</dbReference>
<dbReference type="PDB" id="5HB0">
    <property type="method" value="X-ray"/>
    <property type="resolution" value="3.50 A"/>
    <property type="chains" value="A/B/C/D=851-1402"/>
</dbReference>
<dbReference type="PDB" id="5HB1">
    <property type="method" value="X-ray"/>
    <property type="resolution" value="4.01 A"/>
    <property type="chains" value="A=575-1403"/>
</dbReference>
<dbReference type="PDBsum" id="5HAX"/>
<dbReference type="PDBsum" id="5HAY"/>
<dbReference type="PDBsum" id="5HAZ"/>
<dbReference type="PDBsum" id="5HB0"/>
<dbReference type="PDBsum" id="5HB1"/>
<dbReference type="SMR" id="G0S7B6"/>
<dbReference type="DIP" id="DIP-61836N"/>
<dbReference type="IntAct" id="G0S7B6">
    <property type="interactions" value="4"/>
</dbReference>
<dbReference type="STRING" id="759272.G0S7B6"/>
<dbReference type="TCDB" id="1.I.1.1.2">
    <property type="family name" value="the nuclear pore complex (npc) family"/>
</dbReference>
<dbReference type="GeneID" id="18257665"/>
<dbReference type="KEGG" id="cthr:CTHT_0036270"/>
<dbReference type="eggNOG" id="KOG1900">
    <property type="taxonomic scope" value="Eukaryota"/>
</dbReference>
<dbReference type="HOGENOM" id="CLU_000429_0_1_1"/>
<dbReference type="OMA" id="SWAPFQK"/>
<dbReference type="OrthoDB" id="338970at2759"/>
<dbReference type="EvolutionaryTrace" id="G0S7B6"/>
<dbReference type="Proteomes" id="UP000008066">
    <property type="component" value="Unassembled WGS sequence"/>
</dbReference>
<dbReference type="GO" id="GO:0031965">
    <property type="term" value="C:nuclear membrane"/>
    <property type="evidence" value="ECO:0007669"/>
    <property type="project" value="UniProtKB-SubCell"/>
</dbReference>
<dbReference type="GO" id="GO:0044611">
    <property type="term" value="C:nuclear pore inner ring"/>
    <property type="evidence" value="ECO:0007669"/>
    <property type="project" value="TreeGrafter"/>
</dbReference>
<dbReference type="GO" id="GO:0017056">
    <property type="term" value="F:structural constituent of nuclear pore"/>
    <property type="evidence" value="ECO:0007669"/>
    <property type="project" value="InterPro"/>
</dbReference>
<dbReference type="GO" id="GO:0051028">
    <property type="term" value="P:mRNA transport"/>
    <property type="evidence" value="ECO:0007669"/>
    <property type="project" value="UniProtKB-KW"/>
</dbReference>
<dbReference type="GO" id="GO:0006606">
    <property type="term" value="P:protein import into nucleus"/>
    <property type="evidence" value="ECO:0007669"/>
    <property type="project" value="TreeGrafter"/>
</dbReference>
<dbReference type="GO" id="GO:0036228">
    <property type="term" value="P:protein localization to nuclear inner membrane"/>
    <property type="evidence" value="ECO:0007669"/>
    <property type="project" value="TreeGrafter"/>
</dbReference>
<dbReference type="GO" id="GO:0006405">
    <property type="term" value="P:RNA export from nucleus"/>
    <property type="evidence" value="ECO:0007669"/>
    <property type="project" value="TreeGrafter"/>
</dbReference>
<dbReference type="GO" id="GO:0000972">
    <property type="term" value="P:transcription-dependent tethering of RNA polymerase II gene DNA at nuclear periphery"/>
    <property type="evidence" value="ECO:0007669"/>
    <property type="project" value="TreeGrafter"/>
</dbReference>
<dbReference type="FunFam" id="1.25.40.440:FF:000001">
    <property type="entry name" value="Nuclear pore complex subunit"/>
    <property type="match status" value="1"/>
</dbReference>
<dbReference type="FunFam" id="1.25.40.450:FF:000002">
    <property type="entry name" value="Putative non-repetitive nucleoporin"/>
    <property type="match status" value="1"/>
</dbReference>
<dbReference type="Gene3D" id="1.20.58.1780">
    <property type="match status" value="1"/>
</dbReference>
<dbReference type="Gene3D" id="1.20.120.1880">
    <property type="entry name" value="Nucleoporin, helical C-terminal domain"/>
    <property type="match status" value="1"/>
</dbReference>
<dbReference type="Gene3D" id="1.25.40.440">
    <property type="entry name" value="Nucleoporin, helical domain, central subdomain"/>
    <property type="match status" value="1"/>
</dbReference>
<dbReference type="Gene3D" id="1.25.40.450">
    <property type="entry name" value="Nucleoporin, helical domain, N-terminal subdomain"/>
    <property type="match status" value="1"/>
</dbReference>
<dbReference type="InterPro" id="IPR007187">
    <property type="entry name" value="Nucleoporin_Nup133/Nup155_C"/>
</dbReference>
<dbReference type="InterPro" id="IPR014908">
    <property type="entry name" value="Nucleoporin_Nup133/Nup155_N"/>
</dbReference>
<dbReference type="InterPro" id="IPR004870">
    <property type="entry name" value="Nucleoporin_Nup155"/>
</dbReference>
<dbReference type="InterPro" id="IPR042533">
    <property type="entry name" value="Nucleoporin_Nup155_C_1"/>
</dbReference>
<dbReference type="InterPro" id="IPR042537">
    <property type="entry name" value="Nucleoporin_Nup155_C_2"/>
</dbReference>
<dbReference type="InterPro" id="IPR042538">
    <property type="entry name" value="Nucleoporin_Nup155_C_3"/>
</dbReference>
<dbReference type="PANTHER" id="PTHR10350">
    <property type="entry name" value="NUCLEAR PORE COMPLEX PROTEIN NUP155"/>
    <property type="match status" value="1"/>
</dbReference>
<dbReference type="PANTHER" id="PTHR10350:SF6">
    <property type="entry name" value="NUCLEAR PORE COMPLEX PROTEIN NUP155"/>
    <property type="match status" value="1"/>
</dbReference>
<dbReference type="Pfam" id="PF03177">
    <property type="entry name" value="Nucleoporin_C"/>
    <property type="match status" value="1"/>
</dbReference>
<dbReference type="Pfam" id="PF08801">
    <property type="entry name" value="Nucleoporin_N"/>
    <property type="match status" value="1"/>
</dbReference>